<dbReference type="GO" id="GO:0005576">
    <property type="term" value="C:extracellular region"/>
    <property type="evidence" value="ECO:0007669"/>
    <property type="project" value="UniProtKB-SubCell"/>
</dbReference>
<dbReference type="GO" id="GO:0005179">
    <property type="term" value="F:hormone activity"/>
    <property type="evidence" value="ECO:0007669"/>
    <property type="project" value="UniProtKB-KW"/>
</dbReference>
<dbReference type="GO" id="GO:0097746">
    <property type="term" value="P:blood vessel diameter maintenance"/>
    <property type="evidence" value="ECO:0007669"/>
    <property type="project" value="InterPro"/>
</dbReference>
<dbReference type="GO" id="GO:0008217">
    <property type="term" value="P:regulation of blood pressure"/>
    <property type="evidence" value="ECO:0007669"/>
    <property type="project" value="InterPro"/>
</dbReference>
<dbReference type="InterPro" id="IPR001483">
    <property type="entry name" value="Urotensin_II"/>
</dbReference>
<dbReference type="Pfam" id="PF02083">
    <property type="entry name" value="Urotensin_II"/>
    <property type="match status" value="1"/>
</dbReference>
<dbReference type="PROSITE" id="PS00984">
    <property type="entry name" value="UROTENSIN_II"/>
    <property type="match status" value="1"/>
</dbReference>
<sequence>GSTSECFWKYCV</sequence>
<organism>
    <name type="scientific">Polyodon spathula</name>
    <name type="common">North American paddlefish</name>
    <name type="synonym">Squalus spathula</name>
    <dbReference type="NCBI Taxonomy" id="7913"/>
    <lineage>
        <taxon>Eukaryota</taxon>
        <taxon>Metazoa</taxon>
        <taxon>Chordata</taxon>
        <taxon>Craniata</taxon>
        <taxon>Vertebrata</taxon>
        <taxon>Euteleostomi</taxon>
        <taxon>Actinopterygii</taxon>
        <taxon>Chondrostei</taxon>
        <taxon>Acipenseriformes</taxon>
        <taxon>Polyodontidae</taxon>
        <taxon>Polyodon</taxon>
    </lineage>
</organism>
<evidence type="ECO:0000250" key="1"/>
<evidence type="ECO:0000305" key="2"/>
<feature type="peptide" id="PRO_0000044569" description="Urotensin-2">
    <location>
        <begin position="1"/>
        <end position="12"/>
    </location>
</feature>
<feature type="disulfide bond" evidence="1">
    <location>
        <begin position="6"/>
        <end position="11"/>
    </location>
</feature>
<keyword id="KW-0903">Direct protein sequencing</keyword>
<keyword id="KW-1015">Disulfide bond</keyword>
<keyword id="KW-0372">Hormone</keyword>
<keyword id="KW-0964">Secreted</keyword>
<proteinExistence type="evidence at protein level"/>
<name>UTS2_POLSP</name>
<accession>P81022</accession>
<reference key="1">
    <citation type="journal article" date="1995" name="Gen. Comp. Endocrinol.">
        <title>Urotensin II from the river lamprey (Lampetra fluviatilis), the sea lamprey (Petromyzon marinus), and the paddlefish (Polyodon spathula).</title>
        <authorList>
            <person name="Waugh D."/>
            <person name="Youson J."/>
            <person name="Mims S.D."/>
            <person name="Sower S."/>
            <person name="Conlon J.M."/>
        </authorList>
    </citation>
    <scope>PROTEIN SEQUENCE</scope>
    <source>
        <tissue>Spinal cord</tissue>
    </source>
</reference>
<comment type="function">
    <text>Has a suggested role in osmoregulation and as a corticotropin-releasing factor. Probably involved in smooth muscle stimulation.</text>
</comment>
<comment type="subcellular location">
    <subcellularLocation>
        <location>Secreted</location>
    </subcellularLocation>
</comment>
<comment type="similarity">
    <text evidence="2">Belongs to the urotensin-2 family.</text>
</comment>
<protein>
    <recommendedName>
        <fullName>Urotensin-2</fullName>
    </recommendedName>
    <alternativeName>
        <fullName>Urotensin II</fullName>
        <shortName>U-II</shortName>
        <shortName>UII</shortName>
    </alternativeName>
</protein>